<protein>
    <recommendedName>
        <fullName>Movement protein</fullName>
        <shortName>MP</shortName>
    </recommendedName>
</protein>
<reference key="1">
    <citation type="journal article" date="1984" name="Nucleic Acids Res.">
        <title>Physical structure and genetic organisation of the genome of maize streak virus (Kenyan isolate).</title>
        <authorList>
            <person name="Howell S.H."/>
        </authorList>
    </citation>
    <scope>NUCLEOTIDE SEQUENCE [GENOMIC DNA]</scope>
</reference>
<organism>
    <name type="scientific">Maize streak virus genotype A (isolate Kenya)</name>
    <name type="common">MSV</name>
    <dbReference type="NCBI Taxonomy" id="10822"/>
    <lineage>
        <taxon>Viruses</taxon>
        <taxon>Monodnaviria</taxon>
        <taxon>Shotokuvirae</taxon>
        <taxon>Cressdnaviricota</taxon>
        <taxon>Repensiviricetes</taxon>
        <taxon>Geplafuvirales</taxon>
        <taxon>Geminiviridae</taxon>
        <taxon>Mastrevirus</taxon>
        <taxon>Maize streak virus</taxon>
    </lineage>
</organism>
<proteinExistence type="inferred from homology"/>
<gene>
    <name type="ORF">V2</name>
</gene>
<keyword id="KW-1043">Host membrane</keyword>
<keyword id="KW-0472">Membrane</keyword>
<keyword id="KW-0812">Transmembrane</keyword>
<keyword id="KW-1133">Transmembrane helix</keyword>
<keyword id="KW-0813">Transport</keyword>
<keyword id="KW-0916">Viral movement protein</keyword>
<feature type="chain" id="PRO_0000316925" description="Movement protein">
    <location>
        <begin position="1"/>
        <end position="101"/>
    </location>
</feature>
<feature type="transmembrane region" description="Helical" evidence="2">
    <location>
        <begin position="30"/>
        <end position="50"/>
    </location>
</feature>
<feature type="region of interest" description="Disordered" evidence="3">
    <location>
        <begin position="75"/>
        <end position="101"/>
    </location>
</feature>
<sequence length="101" mass="10906">MDPQNALYYQPRVPTAAPTSGGVPWSRVGEVAILSFVALICFYLLYLWVLRDLILVLKARQGRSTEELIFGGQAVDRSNPIPNIPAPPSQGNPGPFVPGTG</sequence>
<name>MP_MSVK</name>
<organismHost>
    <name type="scientific">Avena sativa</name>
    <name type="common">Oat</name>
    <dbReference type="NCBI Taxonomy" id="4498"/>
</organismHost>
<organismHost>
    <name type="scientific">Axonopus compressus</name>
    <dbReference type="NCBI Taxonomy" id="217170"/>
</organismHost>
<organismHost>
    <name type="scientific">Cenchrus americanus</name>
    <name type="common">Pearl millet</name>
    <name type="synonym">Pennisetum glaucum</name>
    <dbReference type="NCBI Taxonomy" id="4543"/>
</organismHost>
<organismHost>
    <name type="scientific">Cenchrus polystachios</name>
    <dbReference type="NCBI Taxonomy" id="281129"/>
</organismHost>
<organismHost>
    <name type="scientific">Coix lacryma-jobi</name>
    <name type="common">Job's tears</name>
    <dbReference type="NCBI Taxonomy" id="4505"/>
</organismHost>
<organismHost>
    <name type="scientific">Dactyloctenium aegyptium</name>
    <dbReference type="NCBI Taxonomy" id="270102"/>
</organismHost>
<organismHost>
    <name type="scientific">Digitaria</name>
    <dbReference type="NCBI Taxonomy" id="66017"/>
</organismHost>
<organismHost>
    <name type="scientific">Echinochloa colona</name>
    <dbReference type="NCBI Taxonomy" id="90396"/>
</organismHost>
<organismHost>
    <name type="scientific">Eleusine coracana</name>
    <name type="common">Indian finger millet</name>
    <name type="synonym">Ragi</name>
    <dbReference type="NCBI Taxonomy" id="4511"/>
</organismHost>
<organismHost>
    <name type="scientific">Eleusine indica</name>
    <name type="common">Goosegrass</name>
    <name type="synonym">Cynosurus indicus</name>
    <dbReference type="NCBI Taxonomy" id="29674"/>
</organismHost>
<organismHost>
    <name type="scientific">Hordeum vulgare</name>
    <name type="common">Barley</name>
    <dbReference type="NCBI Taxonomy" id="4513"/>
</organismHost>
<organismHost>
    <name type="scientific">Megathyrsus maximus</name>
    <dbReference type="NCBI Taxonomy" id="59788"/>
</organismHost>
<organismHost>
    <name type="scientific">Melinis repens</name>
    <name type="common">Red Natal grass</name>
    <name type="synonym">Rhynchelytrum repens</name>
    <dbReference type="NCBI Taxonomy" id="29709"/>
</organismHost>
<organismHost>
    <name type="scientific">Oryza glaberrima</name>
    <name type="common">African rice</name>
    <dbReference type="NCBI Taxonomy" id="4538"/>
</organismHost>
<organismHost>
    <name type="scientific">Oryza sativa</name>
    <name type="common">Rice</name>
    <dbReference type="NCBI Taxonomy" id="4530"/>
</organismHost>
<organismHost>
    <name type="scientific">Paspalum conjugatum</name>
    <name type="common">Hilo grass</name>
    <dbReference type="NCBI Taxonomy" id="158143"/>
</organismHost>
<organismHost>
    <name type="scientific">Paspalum notatum</name>
    <name type="common">Bahia grass</name>
    <dbReference type="NCBI Taxonomy" id="147272"/>
</organismHost>
<organismHost>
    <name type="scientific">Paspalum scrobiculatum</name>
    <dbReference type="NCBI Taxonomy" id="173849"/>
</organismHost>
<organismHost>
    <name type="scientific">Rottboellia cochinchinensis</name>
    <dbReference type="NCBI Taxonomy" id="300125"/>
</organismHost>
<organismHost>
    <name type="scientific">Saccharum officinarum</name>
    <name type="common">Sugarcane</name>
    <dbReference type="NCBI Taxonomy" id="4547"/>
</organismHost>
<organismHost>
    <name type="scientific">Setaria barbata</name>
    <dbReference type="NCBI Taxonomy" id="192628"/>
</organismHost>
<organismHost>
    <name type="scientific">Triticum aestivum</name>
    <name type="common">Wheat</name>
    <dbReference type="NCBI Taxonomy" id="4565"/>
</organismHost>
<organismHost>
    <name type="scientific">Urochloa deflexa</name>
    <dbReference type="NCBI Taxonomy" id="240436"/>
</organismHost>
<organismHost>
    <name type="scientific">Zea mays</name>
    <name type="common">Maize</name>
    <dbReference type="NCBI Taxonomy" id="4577"/>
</organismHost>
<dbReference type="EMBL" id="X01089">
    <property type="status" value="NOT_ANNOTATED_CDS"/>
    <property type="molecule type" value="Genomic_DNA"/>
</dbReference>
<dbReference type="SMR" id="P0C648"/>
<dbReference type="Proteomes" id="UP000008869">
    <property type="component" value="Genome"/>
</dbReference>
<dbReference type="GO" id="GO:0033644">
    <property type="term" value="C:host cell membrane"/>
    <property type="evidence" value="ECO:0007669"/>
    <property type="project" value="UniProtKB-SubCell"/>
</dbReference>
<dbReference type="GO" id="GO:0016020">
    <property type="term" value="C:membrane"/>
    <property type="evidence" value="ECO:0007669"/>
    <property type="project" value="UniProtKB-KW"/>
</dbReference>
<dbReference type="GO" id="GO:0046740">
    <property type="term" value="P:transport of virus in host, cell to cell"/>
    <property type="evidence" value="ECO:0007669"/>
    <property type="project" value="UniProtKB-KW"/>
</dbReference>
<dbReference type="InterPro" id="IPR002621">
    <property type="entry name" value="Gemini_mov"/>
</dbReference>
<dbReference type="Pfam" id="PF01708">
    <property type="entry name" value="Gemini_mov"/>
    <property type="match status" value="1"/>
</dbReference>
<comment type="function">
    <text>Involved in the viral transport within, and between cells.</text>
</comment>
<comment type="subunit">
    <text evidence="1">Interacts with the capsid protein (CP). Part of a MP-CP-viral DNA complex (By similarity).</text>
</comment>
<comment type="subcellular location">
    <subcellularLocation>
        <location evidence="4">Host membrane</location>
        <topology evidence="4">Single-pass membrane protein</topology>
    </subcellularLocation>
</comment>
<comment type="similarity">
    <text evidence="4">Belongs to the mastrevirus movement protein family.</text>
</comment>
<accession>P0C648</accession>
<evidence type="ECO:0000250" key="1"/>
<evidence type="ECO:0000255" key="2"/>
<evidence type="ECO:0000256" key="3">
    <source>
        <dbReference type="SAM" id="MobiDB-lite"/>
    </source>
</evidence>
<evidence type="ECO:0000305" key="4"/>